<evidence type="ECO:0000269" key="1">
    <source>
    </source>
</evidence>
<evidence type="ECO:0000269" key="2">
    <source>
    </source>
</evidence>
<evidence type="ECO:0000269" key="3">
    <source>
    </source>
</evidence>
<evidence type="ECO:0000269" key="4">
    <source>
    </source>
</evidence>
<evidence type="ECO:0000269" key="5">
    <source>
    </source>
</evidence>
<evidence type="ECO:0000269" key="6">
    <source>
    </source>
</evidence>
<evidence type="ECO:0000269" key="7">
    <source>
    </source>
</evidence>
<evidence type="ECO:0000269" key="8">
    <source>
    </source>
</evidence>
<evidence type="ECO:0000269" key="9">
    <source>
    </source>
</evidence>
<evidence type="ECO:0000303" key="10">
    <source>
    </source>
</evidence>
<evidence type="ECO:0000305" key="11"/>
<evidence type="ECO:0007744" key="12">
    <source>
    </source>
</evidence>
<evidence type="ECO:0007744" key="13">
    <source>
    </source>
</evidence>
<evidence type="ECO:0007744" key="14">
    <source>
    </source>
</evidence>
<evidence type="ECO:0007829" key="15">
    <source>
        <dbReference type="PDB" id="3KDF"/>
    </source>
</evidence>
<proteinExistence type="evidence at protein level"/>
<protein>
    <recommendedName>
        <fullName>Replication protein A 14 kDa subunit</fullName>
        <shortName>RP-A p14</shortName>
    </recommendedName>
    <alternativeName>
        <fullName>Replication factor A protein 3</fullName>
        <shortName>RF-A protein 3</shortName>
    </alternativeName>
</protein>
<name>RFA3_HUMAN</name>
<keyword id="KW-0002">3D-structure</keyword>
<keyword id="KW-0007">Acetylation</keyword>
<keyword id="KW-0227">DNA damage</keyword>
<keyword id="KW-0233">DNA recombination</keyword>
<keyword id="KW-0234">DNA repair</keyword>
<keyword id="KW-0235">DNA replication</keyword>
<keyword id="KW-1017">Isopeptide bond</keyword>
<keyword id="KW-0539">Nucleus</keyword>
<keyword id="KW-1267">Proteomics identification</keyword>
<keyword id="KW-1185">Reference proteome</keyword>
<keyword id="KW-0832">Ubl conjugation</keyword>
<gene>
    <name type="primary">RPA3</name>
    <name type="synonym">REPA3</name>
    <name type="synonym">RPA14</name>
</gene>
<organism>
    <name type="scientific">Homo sapiens</name>
    <name type="common">Human</name>
    <dbReference type="NCBI Taxonomy" id="9606"/>
    <lineage>
        <taxon>Eukaryota</taxon>
        <taxon>Metazoa</taxon>
        <taxon>Chordata</taxon>
        <taxon>Craniata</taxon>
        <taxon>Vertebrata</taxon>
        <taxon>Euteleostomi</taxon>
        <taxon>Mammalia</taxon>
        <taxon>Eutheria</taxon>
        <taxon>Euarchontoglires</taxon>
        <taxon>Primates</taxon>
        <taxon>Haplorrhini</taxon>
        <taxon>Catarrhini</taxon>
        <taxon>Hominidae</taxon>
        <taxon>Homo</taxon>
    </lineage>
</organism>
<sequence length="121" mass="13569">MVDMMDLPRSRINAGMLAQFIDKPVCFVGRLEKIHPTGKMFILSDGEGKNGTIELMEPLDEEISGIVEVVGRVTAKATILCTSYVQFKEDSHPFDLGLYNEAVKIIHDFPQFYPLGIVQHD</sequence>
<dbReference type="EMBL" id="L07493">
    <property type="protein sequence ID" value="AAA58350.1"/>
    <property type="molecule type" value="mRNA"/>
</dbReference>
<dbReference type="EMBL" id="BT007320">
    <property type="protein sequence ID" value="AAP35984.1"/>
    <property type="molecule type" value="mRNA"/>
</dbReference>
<dbReference type="EMBL" id="DQ003136">
    <property type="protein sequence ID" value="AAX84517.1"/>
    <property type="molecule type" value="Genomic_DNA"/>
</dbReference>
<dbReference type="EMBL" id="AC004948">
    <property type="protein sequence ID" value="AAQ96878.1"/>
    <property type="molecule type" value="Genomic_DNA"/>
</dbReference>
<dbReference type="EMBL" id="BC005264">
    <property type="protein sequence ID" value="AAH05264.1"/>
    <property type="molecule type" value="mRNA"/>
</dbReference>
<dbReference type="EMBL" id="BC009868">
    <property type="protein sequence ID" value="AAH09868.1"/>
    <property type="molecule type" value="mRNA"/>
</dbReference>
<dbReference type="CCDS" id="CCDS5356.1"/>
<dbReference type="PIR" id="A46008">
    <property type="entry name" value="A46008"/>
</dbReference>
<dbReference type="RefSeq" id="NP_002938.1">
    <property type="nucleotide sequence ID" value="NM_002947.5"/>
</dbReference>
<dbReference type="RefSeq" id="XP_054214740.1">
    <property type="nucleotide sequence ID" value="XM_054358765.1"/>
</dbReference>
<dbReference type="PDB" id="1L1O">
    <property type="method" value="X-ray"/>
    <property type="resolution" value="2.80 A"/>
    <property type="chains" value="A/D=1-121"/>
</dbReference>
<dbReference type="PDB" id="1QUQ">
    <property type="method" value="X-ray"/>
    <property type="resolution" value="2.50 A"/>
    <property type="chains" value="B/D=1-121"/>
</dbReference>
<dbReference type="PDB" id="2PI2">
    <property type="method" value="X-ray"/>
    <property type="resolution" value="2.00 A"/>
    <property type="chains" value="E/F/G/H=1-121"/>
</dbReference>
<dbReference type="PDB" id="2PQA">
    <property type="method" value="X-ray"/>
    <property type="resolution" value="2.50 A"/>
    <property type="chains" value="B/D=1-121"/>
</dbReference>
<dbReference type="PDB" id="2Z6K">
    <property type="method" value="X-ray"/>
    <property type="resolution" value="3.00 A"/>
    <property type="chains" value="C/D=1-121"/>
</dbReference>
<dbReference type="PDB" id="3KDF">
    <property type="method" value="X-ray"/>
    <property type="resolution" value="1.98 A"/>
    <property type="chains" value="A/C=1-121"/>
</dbReference>
<dbReference type="PDB" id="8RK2">
    <property type="method" value="EM"/>
    <property type="resolution" value="3.20 A"/>
    <property type="chains" value="C=1-121"/>
</dbReference>
<dbReference type="PDB" id="9MJ5">
    <property type="method" value="EM"/>
    <property type="resolution" value="3.50 A"/>
    <property type="chains" value="A=1-121"/>
</dbReference>
<dbReference type="PDBsum" id="1L1O"/>
<dbReference type="PDBsum" id="1QUQ"/>
<dbReference type="PDBsum" id="2PI2"/>
<dbReference type="PDBsum" id="2PQA"/>
<dbReference type="PDBsum" id="2Z6K"/>
<dbReference type="PDBsum" id="3KDF"/>
<dbReference type="PDBsum" id="8RK2"/>
<dbReference type="PDBsum" id="9MJ5"/>
<dbReference type="EMDB" id="EMD-19255"/>
<dbReference type="EMDB" id="EMD-48312"/>
<dbReference type="SASBDB" id="P35244"/>
<dbReference type="SMR" id="P35244"/>
<dbReference type="BioGRID" id="112039">
    <property type="interactions" value="2886"/>
</dbReference>
<dbReference type="ComplexPortal" id="CPX-1878">
    <property type="entry name" value="Replication protein A complex, RPA2 variant"/>
</dbReference>
<dbReference type="ComplexPortal" id="CPX-1879">
    <property type="entry name" value="Replication protein A complex, RPA4 variant"/>
</dbReference>
<dbReference type="CORUM" id="P35244"/>
<dbReference type="DIP" id="DIP-24190N"/>
<dbReference type="FunCoup" id="P35244">
    <property type="interactions" value="1040"/>
</dbReference>
<dbReference type="IntAct" id="P35244">
    <property type="interactions" value="79"/>
</dbReference>
<dbReference type="MINT" id="P35244"/>
<dbReference type="STRING" id="9606.ENSP00000223129"/>
<dbReference type="GlyGen" id="P35244">
    <property type="glycosylation" value="1 site, 1 O-linked glycan (1 site)"/>
</dbReference>
<dbReference type="iPTMnet" id="P35244"/>
<dbReference type="MetOSite" id="P35244"/>
<dbReference type="PhosphoSitePlus" id="P35244"/>
<dbReference type="BioMuta" id="RPA3"/>
<dbReference type="DMDM" id="464608"/>
<dbReference type="jPOST" id="P35244"/>
<dbReference type="MassIVE" id="P35244"/>
<dbReference type="PaxDb" id="9606-ENSP00000223129"/>
<dbReference type="PeptideAtlas" id="P35244"/>
<dbReference type="ProteomicsDB" id="55011"/>
<dbReference type="Pumba" id="P35244"/>
<dbReference type="TopDownProteomics" id="P35244"/>
<dbReference type="Antibodypedia" id="1308">
    <property type="antibodies" value="295 antibodies from 31 providers"/>
</dbReference>
<dbReference type="DNASU" id="6119"/>
<dbReference type="Ensembl" id="ENST00000223129.8">
    <property type="protein sequence ID" value="ENSP00000223129.4"/>
    <property type="gene ID" value="ENSG00000106399.11"/>
</dbReference>
<dbReference type="Ensembl" id="ENST00000396682.6">
    <property type="protein sequence ID" value="ENSP00000379914.2"/>
    <property type="gene ID" value="ENSG00000106399.11"/>
</dbReference>
<dbReference type="GeneID" id="6119"/>
<dbReference type="KEGG" id="hsa:6119"/>
<dbReference type="MANE-Select" id="ENST00000223129.8">
    <property type="protein sequence ID" value="ENSP00000223129.4"/>
    <property type="RefSeq nucleotide sequence ID" value="NM_002947.5"/>
    <property type="RefSeq protein sequence ID" value="NP_002938.1"/>
</dbReference>
<dbReference type="UCSC" id="uc003sri.4">
    <property type="organism name" value="human"/>
</dbReference>
<dbReference type="AGR" id="HGNC:10291"/>
<dbReference type="CTD" id="6119"/>
<dbReference type="DisGeNET" id="6119"/>
<dbReference type="GeneCards" id="RPA3"/>
<dbReference type="HGNC" id="HGNC:10291">
    <property type="gene designation" value="RPA3"/>
</dbReference>
<dbReference type="HPA" id="ENSG00000106399">
    <property type="expression patterns" value="Low tissue specificity"/>
</dbReference>
<dbReference type="MIM" id="179837">
    <property type="type" value="gene"/>
</dbReference>
<dbReference type="neXtProt" id="NX_P35244"/>
<dbReference type="OpenTargets" id="ENSG00000106399"/>
<dbReference type="PharmGKB" id="PA34653"/>
<dbReference type="VEuPathDB" id="HostDB:ENSG00000106399"/>
<dbReference type="eggNOG" id="ENOG502S203">
    <property type="taxonomic scope" value="Eukaryota"/>
</dbReference>
<dbReference type="GeneTree" id="ENSGT00390000008029"/>
<dbReference type="InParanoid" id="P35244"/>
<dbReference type="OMA" id="HEFPEYY"/>
<dbReference type="OrthoDB" id="188186at2759"/>
<dbReference type="PAN-GO" id="P35244">
    <property type="GO annotations" value="9 GO annotations based on evolutionary models"/>
</dbReference>
<dbReference type="PhylomeDB" id="P35244"/>
<dbReference type="TreeFam" id="TF105243"/>
<dbReference type="PathwayCommons" id="P35244"/>
<dbReference type="Reactome" id="R-HSA-110312">
    <property type="pathway name" value="Translesion synthesis by REV1"/>
</dbReference>
<dbReference type="Reactome" id="R-HSA-110314">
    <property type="pathway name" value="Recognition of DNA damage by PCNA-containing replication complex"/>
</dbReference>
<dbReference type="Reactome" id="R-HSA-110320">
    <property type="pathway name" value="Translesion Synthesis by POLH"/>
</dbReference>
<dbReference type="Reactome" id="R-HSA-174437">
    <property type="pathway name" value="Removal of the Flap Intermediate from the C-strand"/>
</dbReference>
<dbReference type="Reactome" id="R-HSA-176187">
    <property type="pathway name" value="Activation of ATR in response to replication stress"/>
</dbReference>
<dbReference type="Reactome" id="R-HSA-3371453">
    <property type="pathway name" value="Regulation of HSF1-mediated heat shock response"/>
</dbReference>
<dbReference type="Reactome" id="R-HSA-3371511">
    <property type="pathway name" value="HSF1 activation"/>
</dbReference>
<dbReference type="Reactome" id="R-HSA-5358565">
    <property type="pathway name" value="Mismatch repair (MMR) directed by MSH2:MSH6 (MutSalpha)"/>
</dbReference>
<dbReference type="Reactome" id="R-HSA-5358606">
    <property type="pathway name" value="Mismatch repair (MMR) directed by MSH2:MSH3 (MutSbeta)"/>
</dbReference>
<dbReference type="Reactome" id="R-HSA-5651801">
    <property type="pathway name" value="PCNA-Dependent Long Patch Base Excision Repair"/>
</dbReference>
<dbReference type="Reactome" id="R-HSA-5655862">
    <property type="pathway name" value="Translesion synthesis by POLK"/>
</dbReference>
<dbReference type="Reactome" id="R-HSA-5656121">
    <property type="pathway name" value="Translesion synthesis by POLI"/>
</dbReference>
<dbReference type="Reactome" id="R-HSA-5656169">
    <property type="pathway name" value="Termination of translesion DNA synthesis"/>
</dbReference>
<dbReference type="Reactome" id="R-HSA-5685938">
    <property type="pathway name" value="HDR through Single Strand Annealing (SSA)"/>
</dbReference>
<dbReference type="Reactome" id="R-HSA-5685942">
    <property type="pathway name" value="HDR through Homologous Recombination (HRR)"/>
</dbReference>
<dbReference type="Reactome" id="R-HSA-5693607">
    <property type="pathway name" value="Processing of DNA double-strand break ends"/>
</dbReference>
<dbReference type="Reactome" id="R-HSA-5693616">
    <property type="pathway name" value="Presynaptic phase of homologous DNA pairing and strand exchange"/>
</dbReference>
<dbReference type="Reactome" id="R-HSA-5696395">
    <property type="pathway name" value="Formation of Incision Complex in GG-NER"/>
</dbReference>
<dbReference type="Reactome" id="R-HSA-5696397">
    <property type="pathway name" value="Gap-filling DNA repair synthesis and ligation in GG-NER"/>
</dbReference>
<dbReference type="Reactome" id="R-HSA-5696400">
    <property type="pathway name" value="Dual Incision in GG-NER"/>
</dbReference>
<dbReference type="Reactome" id="R-HSA-6782135">
    <property type="pathway name" value="Dual incision in TC-NER"/>
</dbReference>
<dbReference type="Reactome" id="R-HSA-6782210">
    <property type="pathway name" value="Gap-filling DNA repair synthesis and ligation in TC-NER"/>
</dbReference>
<dbReference type="Reactome" id="R-HSA-6783310">
    <property type="pathway name" value="Fanconi Anemia Pathway"/>
</dbReference>
<dbReference type="Reactome" id="R-HSA-6804756">
    <property type="pathway name" value="Regulation of TP53 Activity through Phosphorylation"/>
</dbReference>
<dbReference type="Reactome" id="R-HSA-68962">
    <property type="pathway name" value="Activation of the pre-replicative complex"/>
</dbReference>
<dbReference type="Reactome" id="R-HSA-69166">
    <property type="pathway name" value="Removal of the Flap Intermediate"/>
</dbReference>
<dbReference type="Reactome" id="R-HSA-69473">
    <property type="pathway name" value="G2/M DNA damage checkpoint"/>
</dbReference>
<dbReference type="Reactome" id="R-HSA-912446">
    <property type="pathway name" value="Meiotic recombination"/>
</dbReference>
<dbReference type="Reactome" id="R-HSA-9709570">
    <property type="pathway name" value="Impaired BRCA2 binding to RAD51"/>
</dbReference>
<dbReference type="SignaLink" id="P35244"/>
<dbReference type="SIGNOR" id="P35244"/>
<dbReference type="BioGRID-ORCS" id="6119">
    <property type="hits" value="838 hits in 1112 CRISPR screens"/>
</dbReference>
<dbReference type="ChiTaRS" id="RPA3">
    <property type="organism name" value="human"/>
</dbReference>
<dbReference type="EvolutionaryTrace" id="P35244"/>
<dbReference type="GeneWiki" id="RPA3"/>
<dbReference type="GenomeRNAi" id="6119"/>
<dbReference type="Pharos" id="P35244">
    <property type="development level" value="Tbio"/>
</dbReference>
<dbReference type="PRO" id="PR:P35244"/>
<dbReference type="Proteomes" id="UP000005640">
    <property type="component" value="Chromosome 7"/>
</dbReference>
<dbReference type="RNAct" id="P35244">
    <property type="molecule type" value="protein"/>
</dbReference>
<dbReference type="Bgee" id="ENSG00000106399">
    <property type="expression patterns" value="Expressed in bronchial epithelial cell and 207 other cell types or tissues"/>
</dbReference>
<dbReference type="ExpressionAtlas" id="P35244">
    <property type="expression patterns" value="baseline and differential"/>
</dbReference>
<dbReference type="GO" id="GO:0005662">
    <property type="term" value="C:DNA replication factor A complex"/>
    <property type="evidence" value="ECO:0000314"/>
    <property type="project" value="UniProtKB"/>
</dbReference>
<dbReference type="GO" id="GO:0005654">
    <property type="term" value="C:nucleoplasm"/>
    <property type="evidence" value="ECO:0000304"/>
    <property type="project" value="Reactome"/>
</dbReference>
<dbReference type="GO" id="GO:0035861">
    <property type="term" value="C:site of double-strand break"/>
    <property type="evidence" value="ECO:0000318"/>
    <property type="project" value="GO_Central"/>
</dbReference>
<dbReference type="GO" id="GO:0003684">
    <property type="term" value="F:damaged DNA binding"/>
    <property type="evidence" value="ECO:0000314"/>
    <property type="project" value="UniProtKB"/>
</dbReference>
<dbReference type="GO" id="GO:0003697">
    <property type="term" value="F:single-stranded DNA binding"/>
    <property type="evidence" value="ECO:0000314"/>
    <property type="project" value="UniProtKB"/>
</dbReference>
<dbReference type="GO" id="GO:0006284">
    <property type="term" value="P:base-excision repair"/>
    <property type="evidence" value="ECO:0000314"/>
    <property type="project" value="UniProtKB"/>
</dbReference>
<dbReference type="GO" id="GO:0006281">
    <property type="term" value="P:DNA repair"/>
    <property type="evidence" value="ECO:0000314"/>
    <property type="project" value="ComplexPortal"/>
</dbReference>
<dbReference type="GO" id="GO:0006260">
    <property type="term" value="P:DNA replication"/>
    <property type="evidence" value="ECO:0000315"/>
    <property type="project" value="UniProtKB"/>
</dbReference>
<dbReference type="GO" id="GO:0000724">
    <property type="term" value="P:double-strand break repair via homologous recombination"/>
    <property type="evidence" value="ECO:0000315"/>
    <property type="project" value="UniProtKB"/>
</dbReference>
<dbReference type="GO" id="GO:0006298">
    <property type="term" value="P:mismatch repair"/>
    <property type="evidence" value="ECO:0000315"/>
    <property type="project" value="UniProtKB"/>
</dbReference>
<dbReference type="GO" id="GO:0006289">
    <property type="term" value="P:nucleotide-excision repair"/>
    <property type="evidence" value="ECO:0000315"/>
    <property type="project" value="UniProtKB"/>
</dbReference>
<dbReference type="GO" id="GO:0042127">
    <property type="term" value="P:regulation of cell population proliferation"/>
    <property type="evidence" value="ECO:0007669"/>
    <property type="project" value="Ensembl"/>
</dbReference>
<dbReference type="GO" id="GO:0007346">
    <property type="term" value="P:regulation of mitotic cell cycle"/>
    <property type="evidence" value="ECO:0007669"/>
    <property type="project" value="Ensembl"/>
</dbReference>
<dbReference type="GO" id="GO:0000723">
    <property type="term" value="P:telomere maintenance"/>
    <property type="evidence" value="ECO:0000304"/>
    <property type="project" value="BHF-UCL"/>
</dbReference>
<dbReference type="CDD" id="cd04479">
    <property type="entry name" value="RPA3"/>
    <property type="match status" value="1"/>
</dbReference>
<dbReference type="FunFam" id="2.40.50.140:FF:000187">
    <property type="entry name" value="Replication protein A 14 kDa subunit"/>
    <property type="match status" value="1"/>
</dbReference>
<dbReference type="Gene3D" id="2.40.50.140">
    <property type="entry name" value="Nucleic acid-binding proteins"/>
    <property type="match status" value="1"/>
</dbReference>
<dbReference type="IDEAL" id="IID00040"/>
<dbReference type="InterPro" id="IPR012340">
    <property type="entry name" value="NA-bd_OB-fold"/>
</dbReference>
<dbReference type="InterPro" id="IPR013970">
    <property type="entry name" value="Rfa2"/>
</dbReference>
<dbReference type="PANTHER" id="PTHR15114:SF1">
    <property type="entry name" value="REPLICATION PROTEIN A 14 KDA SUBUNIT"/>
    <property type="match status" value="1"/>
</dbReference>
<dbReference type="PANTHER" id="PTHR15114">
    <property type="entry name" value="REPLICATION PROTEIN A3"/>
    <property type="match status" value="1"/>
</dbReference>
<dbReference type="Pfam" id="PF08661">
    <property type="entry name" value="Rep_fac-A_3"/>
    <property type="match status" value="1"/>
</dbReference>
<dbReference type="SUPFAM" id="SSF50249">
    <property type="entry name" value="Nucleic acid-binding proteins"/>
    <property type="match status" value="1"/>
</dbReference>
<feature type="initiator methionine" description="Removed" evidence="12 13 14">
    <location>
        <position position="1"/>
    </location>
</feature>
<feature type="chain" id="PRO_0000097276" description="Replication protein A 14 kDa subunit">
    <location>
        <begin position="2"/>
        <end position="121"/>
    </location>
</feature>
<feature type="modified residue" description="N-acetylvaline" evidence="12 13 14">
    <location>
        <position position="2"/>
    </location>
</feature>
<feature type="cross-link" description="Glycyl lysine isopeptide (Lys-Gly) (interchain with G-Cter in ubiquitin)" evidence="6">
    <location>
        <position position="23"/>
    </location>
</feature>
<feature type="cross-link" description="Glycyl lysine isopeptide (Lys-Gly) (interchain with G-Cter in ubiquitin)" evidence="6">
    <location>
        <position position="39"/>
    </location>
</feature>
<feature type="cross-link" description="Glycyl lysine isopeptide (Lys-Gly) (interchain with G-Cter in ubiquitin)" evidence="6">
    <location>
        <position position="88"/>
    </location>
</feature>
<feature type="helix" evidence="15">
    <location>
        <begin position="4"/>
        <end position="6"/>
    </location>
</feature>
<feature type="strand" evidence="15">
    <location>
        <begin position="10"/>
        <end position="12"/>
    </location>
</feature>
<feature type="helix" evidence="15">
    <location>
        <begin position="14"/>
        <end position="20"/>
    </location>
</feature>
<feature type="strand" evidence="15">
    <location>
        <begin position="24"/>
        <end position="34"/>
    </location>
</feature>
<feature type="strand" evidence="15">
    <location>
        <begin position="38"/>
        <end position="44"/>
    </location>
</feature>
<feature type="strand" evidence="15">
    <location>
        <begin position="50"/>
        <end position="54"/>
    </location>
</feature>
<feature type="strand" evidence="15">
    <location>
        <begin position="65"/>
        <end position="73"/>
    </location>
</feature>
<feature type="strand" evidence="15">
    <location>
        <begin position="79"/>
        <end position="86"/>
    </location>
</feature>
<feature type="strand" evidence="15">
    <location>
        <begin position="90"/>
        <end position="92"/>
    </location>
</feature>
<feature type="helix" evidence="15">
    <location>
        <begin position="96"/>
        <end position="108"/>
    </location>
</feature>
<feature type="helix" evidence="15">
    <location>
        <begin position="110"/>
        <end position="112"/>
    </location>
</feature>
<reference key="1">
    <citation type="journal article" date="1993" name="J. Biol. Chem.">
        <title>Cloning, overexpression, and genomic mapping of the 14-kDa subunit of human replication protein A.</title>
        <authorList>
            <person name="Umbricht C.B."/>
            <person name="Kelly T.J."/>
        </authorList>
    </citation>
    <scope>NUCLEOTIDE SEQUENCE [MRNA]</scope>
</reference>
<reference key="2">
    <citation type="submission" date="2003-05" db="EMBL/GenBank/DDBJ databases">
        <title>Cloning of human full-length CDSs in BD Creator(TM) system donor vector.</title>
        <authorList>
            <person name="Kalnine N."/>
            <person name="Chen X."/>
            <person name="Rolfs A."/>
            <person name="Halleck A."/>
            <person name="Hines L."/>
            <person name="Eisenstein S."/>
            <person name="Koundinya M."/>
            <person name="Raphael J."/>
            <person name="Moreira D."/>
            <person name="Kelley T."/>
            <person name="LaBaer J."/>
            <person name="Lin Y."/>
            <person name="Phelan M."/>
            <person name="Farmer A."/>
        </authorList>
    </citation>
    <scope>NUCLEOTIDE SEQUENCE [LARGE SCALE MRNA]</scope>
</reference>
<reference key="3">
    <citation type="submission" date="2005-04" db="EMBL/GenBank/DDBJ databases">
        <authorList>
            <consortium name="NIEHS SNPs program"/>
        </authorList>
    </citation>
    <scope>NUCLEOTIDE SEQUENCE [GENOMIC DNA]</scope>
</reference>
<reference key="4">
    <citation type="journal article" date="2003" name="Nature">
        <title>The DNA sequence of human chromosome 7.</title>
        <authorList>
            <person name="Hillier L.W."/>
            <person name="Fulton R.S."/>
            <person name="Fulton L.A."/>
            <person name="Graves T.A."/>
            <person name="Pepin K.H."/>
            <person name="Wagner-McPherson C."/>
            <person name="Layman D."/>
            <person name="Maas J."/>
            <person name="Jaeger S."/>
            <person name="Walker R."/>
            <person name="Wylie K."/>
            <person name="Sekhon M."/>
            <person name="Becker M.C."/>
            <person name="O'Laughlin M.D."/>
            <person name="Schaller M.E."/>
            <person name="Fewell G.A."/>
            <person name="Delehaunty K.D."/>
            <person name="Miner T.L."/>
            <person name="Nash W.E."/>
            <person name="Cordes M."/>
            <person name="Du H."/>
            <person name="Sun H."/>
            <person name="Edwards J."/>
            <person name="Bradshaw-Cordum H."/>
            <person name="Ali J."/>
            <person name="Andrews S."/>
            <person name="Isak A."/>
            <person name="Vanbrunt A."/>
            <person name="Nguyen C."/>
            <person name="Du F."/>
            <person name="Lamar B."/>
            <person name="Courtney L."/>
            <person name="Kalicki J."/>
            <person name="Ozersky P."/>
            <person name="Bielicki L."/>
            <person name="Scott K."/>
            <person name="Holmes A."/>
            <person name="Harkins R."/>
            <person name="Harris A."/>
            <person name="Strong C.M."/>
            <person name="Hou S."/>
            <person name="Tomlinson C."/>
            <person name="Dauphin-Kohlberg S."/>
            <person name="Kozlowicz-Reilly A."/>
            <person name="Leonard S."/>
            <person name="Rohlfing T."/>
            <person name="Rock S.M."/>
            <person name="Tin-Wollam A.-M."/>
            <person name="Abbott A."/>
            <person name="Minx P."/>
            <person name="Maupin R."/>
            <person name="Strowmatt C."/>
            <person name="Latreille P."/>
            <person name="Miller N."/>
            <person name="Johnson D."/>
            <person name="Murray J."/>
            <person name="Woessner J.P."/>
            <person name="Wendl M.C."/>
            <person name="Yang S.-P."/>
            <person name="Schultz B.R."/>
            <person name="Wallis J.W."/>
            <person name="Spieth J."/>
            <person name="Bieri T.A."/>
            <person name="Nelson J.O."/>
            <person name="Berkowicz N."/>
            <person name="Wohldmann P.E."/>
            <person name="Cook L.L."/>
            <person name="Hickenbotham M.T."/>
            <person name="Eldred J."/>
            <person name="Williams D."/>
            <person name="Bedell J.A."/>
            <person name="Mardis E.R."/>
            <person name="Clifton S.W."/>
            <person name="Chissoe S.L."/>
            <person name="Marra M.A."/>
            <person name="Raymond C."/>
            <person name="Haugen E."/>
            <person name="Gillett W."/>
            <person name="Zhou Y."/>
            <person name="James R."/>
            <person name="Phelps K."/>
            <person name="Iadanoto S."/>
            <person name="Bubb K."/>
            <person name="Simms E."/>
            <person name="Levy R."/>
            <person name="Clendenning J."/>
            <person name="Kaul R."/>
            <person name="Kent W.J."/>
            <person name="Furey T.S."/>
            <person name="Baertsch R.A."/>
            <person name="Brent M.R."/>
            <person name="Keibler E."/>
            <person name="Flicek P."/>
            <person name="Bork P."/>
            <person name="Suyama M."/>
            <person name="Bailey J.A."/>
            <person name="Portnoy M.E."/>
            <person name="Torrents D."/>
            <person name="Chinwalla A.T."/>
            <person name="Gish W.R."/>
            <person name="Eddy S.R."/>
            <person name="McPherson J.D."/>
            <person name="Olson M.V."/>
            <person name="Eichler E.E."/>
            <person name="Green E.D."/>
            <person name="Waterston R.H."/>
            <person name="Wilson R.K."/>
        </authorList>
    </citation>
    <scope>NUCLEOTIDE SEQUENCE [LARGE SCALE GENOMIC DNA]</scope>
</reference>
<reference key="5">
    <citation type="journal article" date="2004" name="Genome Res.">
        <title>The status, quality, and expansion of the NIH full-length cDNA project: the Mammalian Gene Collection (MGC).</title>
        <authorList>
            <consortium name="The MGC Project Team"/>
        </authorList>
    </citation>
    <scope>NUCLEOTIDE SEQUENCE [LARGE SCALE MRNA]</scope>
    <source>
        <tissue>Kidney</tissue>
        <tissue>Lung</tissue>
    </source>
</reference>
<reference key="6">
    <citation type="journal article" date="1995" name="Cell">
        <title>Mammalian DNA nucleotide excision repair reconstituted with purified protein components.</title>
        <authorList>
            <person name="Aboussekhra A."/>
            <person name="Biggerstaff M."/>
            <person name="Shivji M.K."/>
            <person name="Vilpo J.A."/>
            <person name="Moncollin V."/>
            <person name="Podust V.N."/>
            <person name="Protic M."/>
            <person name="Huebscher U."/>
            <person name="Egly J.M."/>
            <person name="Wood R.D."/>
        </authorList>
    </citation>
    <scope>FUNCTION IN NUCLEOTIDE EXCISION REPAIR</scope>
</reference>
<reference key="7">
    <citation type="journal article" date="1995" name="Mol. Cell. Biol.">
        <title>Rpa4, a homolog of the 34-kilodalton subunit of the replication protein A complex.</title>
        <authorList>
            <person name="Keshav K.F."/>
            <person name="Chen C."/>
            <person name="Dutta A."/>
        </authorList>
    </citation>
    <scope>INTERACTION WITH RPA4</scope>
</reference>
<reference key="8">
    <citation type="journal article" date="1998" name="J. Biol. Chem.">
        <title>The evolutionarily conserved zinc finger motif in the largest subunit of human replication protein A is required for DNA replication and mismatch repair but not for nucleotide excision repair.</title>
        <authorList>
            <person name="Lin Y.L."/>
            <person name="Shivji M.K."/>
            <person name="Chen C."/>
            <person name="Kolodner R."/>
            <person name="Wood R.D."/>
            <person name="Dutta A."/>
        </authorList>
    </citation>
    <scope>FUNCTION IN DNA REPLICATION</scope>
    <scope>SUBCELLULAR LOCATION</scope>
    <scope>FUNCTION IN DNA MISMATCH REPAIR</scope>
    <scope>FUNCTION IN NUCLEOTIDE EXCISION REPAIR</scope>
</reference>
<reference key="9">
    <citation type="journal article" date="1998" name="J. Biol. Chem.">
        <title>Replication protein A stimulates long patch DNA base excision repair.</title>
        <authorList>
            <person name="DeMott M.S."/>
            <person name="Zigman S."/>
            <person name="Bambara R.A."/>
        </authorList>
    </citation>
    <scope>FUNCTION IN BASE EXCISION REPAIR</scope>
</reference>
<reference key="10">
    <citation type="journal article" date="2007" name="Blood">
        <title>FANCJ (BACH1) helicase forms DNA damage inducible foci with replication protein A and interacts physically and functionally with the single-stranded DNA-binding protein.</title>
        <authorList>
            <person name="Gupta R."/>
            <person name="Sharma S."/>
            <person name="Sommers J.A."/>
            <person name="Kenny M.K."/>
            <person name="Cantor S.B."/>
            <person name="Brosh R.M. Jr."/>
        </authorList>
    </citation>
    <scope>FUNCTION</scope>
    <scope>INTERACTION WITH BRIP1</scope>
    <scope>SUBCELLULAR LOCATION</scope>
</reference>
<reference key="11">
    <citation type="journal article" date="2009" name="Anal. Chem.">
        <title>Lys-N and trypsin cover complementary parts of the phosphoproteome in a refined SCX-based approach.</title>
        <authorList>
            <person name="Gauci S."/>
            <person name="Helbig A.O."/>
            <person name="Slijper M."/>
            <person name="Krijgsveld J."/>
            <person name="Heck A.J."/>
            <person name="Mohammed S."/>
        </authorList>
    </citation>
    <scope>ACETYLATION [LARGE SCALE ANALYSIS] AT VAL-2</scope>
    <scope>CLEAVAGE OF INITIATOR METHIONINE [LARGE SCALE ANALYSIS]</scope>
    <scope>IDENTIFICATION BY MASS SPECTROMETRY [LARGE SCALE ANALYSIS]</scope>
</reference>
<reference key="12">
    <citation type="journal article" date="2009" name="J. Biol. Chem.">
        <title>An alternative form of replication protein a prevents viral replication in vitro.</title>
        <authorList>
            <person name="Mason A.C."/>
            <person name="Haring S.J."/>
            <person name="Pryor J.M."/>
            <person name="Staloch C.A."/>
            <person name="Gan T.F."/>
            <person name="Wold M.S."/>
        </authorList>
    </citation>
    <scope>IDENTIFICATION IN THE ARPA COMPLEX</scope>
    <scope>FUNCTION OF THE ARPA COMPLEX</scope>
</reference>
<reference key="13">
    <citation type="journal article" date="2009" name="Nucleic Acids Res.">
        <title>Evidence for direct contact between the RPA3 subunit of the human replication protein A and single-stranded DNA.</title>
        <authorList>
            <person name="Salas T.R."/>
            <person name="Petruseva I."/>
            <person name="Lavrik O."/>
            <person name="Saintome C."/>
        </authorList>
    </citation>
    <scope>SINGLE-STRANDED DNA-BINDING</scope>
</reference>
<reference key="14">
    <citation type="journal article" date="2010" name="J. Biol. Chem.">
        <title>An alternative form of replication protein a expressed in normal human tissues supports DNA repair.</title>
        <authorList>
            <person name="Kemp M.G."/>
            <person name="Mason A.C."/>
            <person name="Carreira A."/>
            <person name="Reardon J.T."/>
            <person name="Haring S.J."/>
            <person name="Borgstahl G.E."/>
            <person name="Kowalczykowski S.C."/>
            <person name="Sancar A."/>
            <person name="Wold M.S."/>
        </authorList>
    </citation>
    <scope>FUNCTION OF THE ARPA COMPLEX</scope>
</reference>
<reference key="15">
    <citation type="journal article" date="2011" name="BMC Syst. Biol.">
        <title>Initial characterization of the human central proteome.</title>
        <authorList>
            <person name="Burkard T.R."/>
            <person name="Planyavsky M."/>
            <person name="Kaupe I."/>
            <person name="Breitwieser F.P."/>
            <person name="Buerckstuemmer T."/>
            <person name="Bennett K.L."/>
            <person name="Superti-Furga G."/>
            <person name="Colinge J."/>
        </authorList>
    </citation>
    <scope>IDENTIFICATION BY MASS SPECTROMETRY [LARGE SCALE ANALYSIS]</scope>
</reference>
<reference key="16">
    <citation type="journal article" date="2012" name="Mol. Cell. Proteomics">
        <title>Comparative large-scale characterisation of plant vs. mammal proteins reveals similar and idiosyncratic N-alpha acetylation features.</title>
        <authorList>
            <person name="Bienvenut W.V."/>
            <person name="Sumpton D."/>
            <person name="Martinez A."/>
            <person name="Lilla S."/>
            <person name="Espagne C."/>
            <person name="Meinnel T."/>
            <person name="Giglione C."/>
        </authorList>
    </citation>
    <scope>ACETYLATION [LARGE SCALE ANALYSIS] AT VAL-2</scope>
    <scope>CLEAVAGE OF INITIATOR METHIONINE [LARGE SCALE ANALYSIS]</scope>
    <scope>IDENTIFICATION BY MASS SPECTROMETRY [LARGE SCALE ANALYSIS]</scope>
</reference>
<reference key="17">
    <citation type="journal article" date="2012" name="Proc. Natl. Acad. Sci. U.S.A.">
        <title>N-terminal acetylome analyses and functional insights of the N-terminal acetyltransferase NatB.</title>
        <authorList>
            <person name="Van Damme P."/>
            <person name="Lasa M."/>
            <person name="Polevoda B."/>
            <person name="Gazquez C."/>
            <person name="Elosegui-Artola A."/>
            <person name="Kim D.S."/>
            <person name="De Juan-Pardo E."/>
            <person name="Demeyer K."/>
            <person name="Hole K."/>
            <person name="Larrea E."/>
            <person name="Timmerman E."/>
            <person name="Prieto J."/>
            <person name="Arnesen T."/>
            <person name="Sherman F."/>
            <person name="Gevaert K."/>
            <person name="Aldabe R."/>
        </authorList>
    </citation>
    <scope>ACETYLATION [LARGE SCALE ANALYSIS] AT VAL-2</scope>
    <scope>CLEAVAGE OF INITIATOR METHIONINE [LARGE SCALE ANALYSIS]</scope>
    <scope>IDENTIFICATION BY MASS SPECTROMETRY [LARGE SCALE ANALYSIS]</scope>
</reference>
<reference key="18">
    <citation type="journal article" date="2014" name="J. Proteomics">
        <title>An enzyme assisted RP-RPLC approach for in-depth analysis of human liver phosphoproteome.</title>
        <authorList>
            <person name="Bian Y."/>
            <person name="Song C."/>
            <person name="Cheng K."/>
            <person name="Dong M."/>
            <person name="Wang F."/>
            <person name="Huang J."/>
            <person name="Sun D."/>
            <person name="Wang L."/>
            <person name="Ye M."/>
            <person name="Zou H."/>
        </authorList>
    </citation>
    <scope>IDENTIFICATION BY MASS SPECTROMETRY [LARGE SCALE ANALYSIS]</scope>
    <source>
        <tissue>Liver</tissue>
    </source>
</reference>
<reference key="19">
    <citation type="journal article" date="2014" name="Mol. Cell">
        <title>PRP19 transforms into a sensor of RPA-ssDNA after DNA damage and drives ATR activation via a ubiquitin-mediated circuitry.</title>
        <authorList>
            <person name="Marechal A."/>
            <person name="Li J.M."/>
            <person name="Ji X.Y."/>
            <person name="Wu C.S."/>
            <person name="Yazinski S.A."/>
            <person name="Nguyen H.D."/>
            <person name="Liu S."/>
            <person name="Jimenez A.E."/>
            <person name="Jin J."/>
            <person name="Zou L."/>
        </authorList>
    </citation>
    <scope>FUNCTION</scope>
</reference>
<reference key="20">
    <citation type="journal article" date="2015" name="Mol. Cell">
        <title>RFWD3-dependent ubiquitination of RPA regulates repair at stalled replication forks.</title>
        <authorList>
            <person name="Elia A.E."/>
            <person name="Wang D.C."/>
            <person name="Willis N.A."/>
            <person name="Boardman A.P."/>
            <person name="Hajdu I."/>
            <person name="Adeyemi R.O."/>
            <person name="Lowry E."/>
            <person name="Gygi S.P."/>
            <person name="Scully R."/>
            <person name="Elledge S.J."/>
        </authorList>
    </citation>
    <scope>UBIQUITINATION AT LYS-23; LYS-39 AND LYS-88</scope>
</reference>
<reference key="21">
    <citation type="journal article" date="2015" name="Proteomics">
        <title>N-terminome analysis of the human mitochondrial proteome.</title>
        <authorList>
            <person name="Vaca Jacome A.S."/>
            <person name="Rabilloud T."/>
            <person name="Schaeffer-Reiss C."/>
            <person name="Rompais M."/>
            <person name="Ayoub D."/>
            <person name="Lane L."/>
            <person name="Bairoch A."/>
            <person name="Van Dorsselaer A."/>
            <person name="Carapito C."/>
        </authorList>
    </citation>
    <scope>IDENTIFICATION BY MASS SPECTROMETRY [LARGE SCALE ANALYSIS]</scope>
</reference>
<reference key="22">
    <citation type="journal article" date="2002" name="EMBO J.">
        <title>Structure of the RPA trimerization core and its role in the multistep DNA-binding mechanism of RPA.</title>
        <authorList>
            <person name="Bochkareva E."/>
            <person name="Korolev S."/>
            <person name="Lees-Miller S.P."/>
            <person name="Bochkarev A."/>
        </authorList>
    </citation>
    <scope>X-RAY CRYSTALLOGRAPHY (2.8 ANGSTROMS) IN COMPLEX WITH RPA1 AND RPA2</scope>
</reference>
<accession>P35244</accession>
<accession>Q549U6</accession>
<comment type="function">
    <text evidence="2 3 4 5 7 8 9 10">As part of the heterotrimeric replication protein A complex (RPA/RP-A), binds and stabilizes single-stranded DNA intermediates that form during DNA replication or upon DNA stress. It prevents their reannealing and in parallel, recruits and activates different proteins and complexes involved in DNA metabolism. Thereby, it plays an essential role both in DNA replication and the cellular response to DNA damage (PubMed:17596542, PubMed:9430682). In the cellular response to DNA damage, the RPA complex controls DNA repair and DNA damage checkpoint activation. Through recruitment of ATRIP activates the ATR kinase a master regulator of the DNA damage response (PubMed:24332808). It is required for the recruitment of the DNA double-strand break repair factors RAD51 and RAD52 to chromatin, in response to DNA damage. Also recruits to sites of DNA damage proteins like XPA and XPG that are involved in nucleotide excision repair and is required for this mechanism of DNA repair (PubMed:7697716). Also plays a role in base excision repair (BER), probably through interaction with UNG (PubMed:9765279). RPA stimulates 5'-3' helicase activity of BRIP1/FANCJ (PubMed:17596542). Also recruits SMARCAL1/HARP, which is involved in replication fork restart, to sites of DNA damage. May also play a role in telomere maintenance. RPA3 has its own single-stranded DNA-binding activity and may be responsible for polarity of the binding of the complex to DNA (PubMed:19010961). As part of the alternative replication protein A complex, aRPA, binds single-stranded DNA and probably plays a role in DNA repair. Compared to the RPA2-containing, canonical RPA complex, may not support chromosomal DNA replication and cell cycle progression through S-phase. The aRPA may not promote efficient priming by DNA polymerase alpha but could support DNA synthesis by polymerase delta in presence of PCNA and replication factor C (RFC), the dual incision/excision reaction of nucleotide excision repair and RAD51-dependent strand exchange (PubMed:19996105).</text>
</comment>
<comment type="subunit">
    <text evidence="1 2 4">Component of the canonical replication protein A complex (RPA), a heterotrimer composed of RPA1, RPA2 and RPA3. Also a component of the aRPA, the alternative replication protein A complex, a trimeric complex similar to the replication protein A complex/RPA but where RPA1 and RPA3 are associated with RPA4 instead of RPA2. Interacts with BRIP1/FANCJ via the RPA1 subunit; following DNA damage they colocalize in foci in the nucleus (PubMed:17596542).</text>
</comment>
<comment type="interaction">
    <interactant intactId="EBI-621428">
        <id>P35244</id>
    </interactant>
    <interactant intactId="EBI-706448">
        <id>P43351</id>
        <label>RAD52</label>
    </interactant>
    <organismsDiffer>false</organismsDiffer>
    <experiments>3</experiments>
</comment>
<comment type="interaction">
    <interactant intactId="EBI-621428">
        <id>P35244</id>
    </interactant>
    <interactant intactId="EBI-621389">
        <id>P27694</id>
        <label>RPA1</label>
    </interactant>
    <organismsDiffer>false</organismsDiffer>
    <experiments>11</experiments>
</comment>
<comment type="interaction">
    <interactant intactId="EBI-621428">
        <id>P35244</id>
    </interactant>
    <interactant intactId="EBI-621404">
        <id>P15927</id>
        <label>RPA2</label>
    </interactant>
    <organismsDiffer>false</organismsDiffer>
    <experiments>14</experiments>
</comment>
<comment type="interaction">
    <interactant intactId="EBI-621428">
        <id>P35244</id>
    </interactant>
    <interactant intactId="EBI-2856301">
        <id>Q13156</id>
        <label>RPA4</label>
    </interactant>
    <organismsDiffer>false</organismsDiffer>
    <experiments>4</experiments>
</comment>
<comment type="subcellular location">
    <subcellularLocation>
        <location evidence="2 8">Nucleus</location>
    </subcellularLocation>
</comment>
<comment type="PTM">
    <text evidence="6">Ubiquitinated by RFWD3 at stalled replication forks in response to DNA damage: ubiquitination by RFWD3 does not lead to degradation by the proteasome and promotes removal of the RPA complex from stalled replication forks, promoting homologous recombination (PubMed:26474068).</text>
</comment>
<comment type="similarity">
    <text evidence="11">Belongs to the replication factor A protein 3 family.</text>
</comment>